<sequence length="488" mass="55066">MTKNNEAGWNLDNSYATLPHSFYTEIPPTPVSSPELVKLNHSLAISLGFNPEELKKETEIAIFAGNALPEGAHPLAQAYAGHQFGHFNMLGDGRALLIGEQITPSGKRFDIQLKGSGPTPYSRRGDGRAALGPMLREYIISEAMYALDIPTTRSLAVVTTGEPTYRETKLPGAILTRVASSHIRVGTFQYAAARGSIEDLQSLADYTIKRHYPEIEDPENRYTALLQEVIKKQASLIAKWQLVGFIHGVMNTDNITISGETIDYGPCAFMDHYDQGTVFSSIDTQGRYAYGNQPYMAAWDLARLAESLIPILHEDEEEALKIAQDEISKFSVQYENLWFLGMKKKLGLFSNEEQDHSLIEQLLKMMEKYKADYTNTFRSLTLNTLENTPLFDSSEFKEWYKLWQSRLERQDESKENAYEMMKNNNPSIIPRNHRVEEALEAAVTNGDYSVMEKLLEALANPYAYATDQEEYCVTPAPTNRPYRTFCGT</sequence>
<organism>
    <name type="scientific">Bacillus cereus (strain ATCC 10987 / NRS 248)</name>
    <dbReference type="NCBI Taxonomy" id="222523"/>
    <lineage>
        <taxon>Bacteria</taxon>
        <taxon>Bacillati</taxon>
        <taxon>Bacillota</taxon>
        <taxon>Bacilli</taxon>
        <taxon>Bacillales</taxon>
        <taxon>Bacillaceae</taxon>
        <taxon>Bacillus</taxon>
        <taxon>Bacillus cereus group</taxon>
    </lineage>
</organism>
<feature type="chain" id="PRO_0000271806" description="Protein nucleotidyltransferase YdiU">
    <location>
        <begin position="1"/>
        <end position="488"/>
    </location>
</feature>
<feature type="active site" description="Proton acceptor" evidence="1">
    <location>
        <position position="253"/>
    </location>
</feature>
<feature type="binding site" evidence="1">
    <location>
        <position position="91"/>
    </location>
    <ligand>
        <name>ATP</name>
        <dbReference type="ChEBI" id="CHEBI:30616"/>
    </ligand>
</feature>
<feature type="binding site" evidence="1">
    <location>
        <position position="93"/>
    </location>
    <ligand>
        <name>ATP</name>
        <dbReference type="ChEBI" id="CHEBI:30616"/>
    </ligand>
</feature>
<feature type="binding site" evidence="1">
    <location>
        <position position="94"/>
    </location>
    <ligand>
        <name>ATP</name>
        <dbReference type="ChEBI" id="CHEBI:30616"/>
    </ligand>
</feature>
<feature type="binding site" evidence="1">
    <location>
        <position position="114"/>
    </location>
    <ligand>
        <name>ATP</name>
        <dbReference type="ChEBI" id="CHEBI:30616"/>
    </ligand>
</feature>
<feature type="binding site" evidence="1">
    <location>
        <position position="126"/>
    </location>
    <ligand>
        <name>ATP</name>
        <dbReference type="ChEBI" id="CHEBI:30616"/>
    </ligand>
</feature>
<feature type="binding site" evidence="1">
    <location>
        <position position="127"/>
    </location>
    <ligand>
        <name>ATP</name>
        <dbReference type="ChEBI" id="CHEBI:30616"/>
    </ligand>
</feature>
<feature type="binding site" evidence="1">
    <location>
        <position position="177"/>
    </location>
    <ligand>
        <name>ATP</name>
        <dbReference type="ChEBI" id="CHEBI:30616"/>
    </ligand>
</feature>
<feature type="binding site" evidence="1">
    <location>
        <position position="184"/>
    </location>
    <ligand>
        <name>ATP</name>
        <dbReference type="ChEBI" id="CHEBI:30616"/>
    </ligand>
</feature>
<feature type="binding site" evidence="1">
    <location>
        <position position="254"/>
    </location>
    <ligand>
        <name>Mg(2+)</name>
        <dbReference type="ChEBI" id="CHEBI:18420"/>
    </ligand>
</feature>
<feature type="binding site" evidence="1">
    <location>
        <position position="263"/>
    </location>
    <ligand>
        <name>ATP</name>
        <dbReference type="ChEBI" id="CHEBI:30616"/>
    </ligand>
</feature>
<feature type="binding site" evidence="1">
    <location>
        <position position="263"/>
    </location>
    <ligand>
        <name>Mg(2+)</name>
        <dbReference type="ChEBI" id="CHEBI:18420"/>
    </ligand>
</feature>
<evidence type="ECO:0000255" key="1">
    <source>
        <dbReference type="HAMAP-Rule" id="MF_00692"/>
    </source>
</evidence>
<accession>Q733Y5</accession>
<reference key="1">
    <citation type="journal article" date="2004" name="Nucleic Acids Res.">
        <title>The genome sequence of Bacillus cereus ATCC 10987 reveals metabolic adaptations and a large plasmid related to Bacillus anthracis pXO1.</title>
        <authorList>
            <person name="Rasko D.A."/>
            <person name="Ravel J."/>
            <person name="Oekstad O.A."/>
            <person name="Helgason E."/>
            <person name="Cer R.Z."/>
            <person name="Jiang L."/>
            <person name="Shores K.A."/>
            <person name="Fouts D.E."/>
            <person name="Tourasse N.J."/>
            <person name="Angiuoli S.V."/>
            <person name="Kolonay J.F."/>
            <person name="Nelson W.C."/>
            <person name="Kolstoe A.-B."/>
            <person name="Fraser C.M."/>
            <person name="Read T.D."/>
        </authorList>
    </citation>
    <scope>NUCLEOTIDE SEQUENCE [LARGE SCALE GENOMIC DNA]</scope>
    <source>
        <strain>ATCC 10987 / NRS 248</strain>
    </source>
</reference>
<gene>
    <name evidence="1" type="primary">ydiU</name>
    <name evidence="1" type="synonym">selO</name>
    <name type="ordered locus">BCE_3522</name>
</gene>
<keyword id="KW-0067">ATP-binding</keyword>
<keyword id="KW-0460">Magnesium</keyword>
<keyword id="KW-0464">Manganese</keyword>
<keyword id="KW-0479">Metal-binding</keyword>
<keyword id="KW-0547">Nucleotide-binding</keyword>
<keyword id="KW-0548">Nucleotidyltransferase</keyword>
<keyword id="KW-0808">Transferase</keyword>
<protein>
    <recommendedName>
        <fullName evidence="1">Protein nucleotidyltransferase YdiU</fullName>
        <ecNumber evidence="1">2.7.7.-</ecNumber>
    </recommendedName>
    <alternativeName>
        <fullName evidence="1">Protein adenylyltransferase YdiU</fullName>
        <ecNumber evidence="1">2.7.7.108</ecNumber>
    </alternativeName>
    <alternativeName>
        <fullName evidence="1">Protein uridylyltransferase YdiU</fullName>
        <ecNumber evidence="1">2.7.7.-</ecNumber>
    </alternativeName>
</protein>
<proteinExistence type="inferred from homology"/>
<name>SELO_BACC1</name>
<dbReference type="EC" id="2.7.7.-" evidence="1"/>
<dbReference type="EC" id="2.7.7.108" evidence="1"/>
<dbReference type="EMBL" id="AE017194">
    <property type="protein sequence ID" value="AAS42428.1"/>
    <property type="molecule type" value="Genomic_DNA"/>
</dbReference>
<dbReference type="SMR" id="Q733Y5"/>
<dbReference type="DNASU" id="2747271"/>
<dbReference type="KEGG" id="bca:BCE_3522"/>
<dbReference type="HOGENOM" id="CLU_010245_4_1_9"/>
<dbReference type="Proteomes" id="UP000002527">
    <property type="component" value="Chromosome"/>
</dbReference>
<dbReference type="GO" id="GO:0070733">
    <property type="term" value="F:AMPylase activity"/>
    <property type="evidence" value="ECO:0007669"/>
    <property type="project" value="RHEA"/>
</dbReference>
<dbReference type="GO" id="GO:0005524">
    <property type="term" value="F:ATP binding"/>
    <property type="evidence" value="ECO:0007669"/>
    <property type="project" value="UniProtKB-UniRule"/>
</dbReference>
<dbReference type="GO" id="GO:0000287">
    <property type="term" value="F:magnesium ion binding"/>
    <property type="evidence" value="ECO:0007669"/>
    <property type="project" value="UniProtKB-UniRule"/>
</dbReference>
<dbReference type="HAMAP" id="MF_00692">
    <property type="entry name" value="YdiU_SelO"/>
    <property type="match status" value="1"/>
</dbReference>
<dbReference type="InterPro" id="IPR003846">
    <property type="entry name" value="SelO"/>
</dbReference>
<dbReference type="NCBIfam" id="NF000658">
    <property type="entry name" value="PRK00029.1"/>
    <property type="match status" value="1"/>
</dbReference>
<dbReference type="PANTHER" id="PTHR32057">
    <property type="entry name" value="PROTEIN ADENYLYLTRANSFERASE SELO, MITOCHONDRIAL"/>
    <property type="match status" value="1"/>
</dbReference>
<dbReference type="PANTHER" id="PTHR32057:SF14">
    <property type="entry name" value="PROTEIN ADENYLYLTRANSFERASE SELO, MITOCHONDRIAL"/>
    <property type="match status" value="1"/>
</dbReference>
<dbReference type="Pfam" id="PF02696">
    <property type="entry name" value="SelO"/>
    <property type="match status" value="1"/>
</dbReference>
<comment type="function">
    <text evidence="1">Nucleotidyltransferase involved in the post-translational modification of proteins. It can catalyze the addition of adenosine monophosphate (AMP) or uridine monophosphate (UMP) to a protein, resulting in modifications known as AMPylation and UMPylation.</text>
</comment>
<comment type="catalytic activity">
    <reaction evidence="1">
        <text>L-seryl-[protein] + ATP = 3-O-(5'-adenylyl)-L-seryl-[protein] + diphosphate</text>
        <dbReference type="Rhea" id="RHEA:58120"/>
        <dbReference type="Rhea" id="RHEA-COMP:9863"/>
        <dbReference type="Rhea" id="RHEA-COMP:15073"/>
        <dbReference type="ChEBI" id="CHEBI:29999"/>
        <dbReference type="ChEBI" id="CHEBI:30616"/>
        <dbReference type="ChEBI" id="CHEBI:33019"/>
        <dbReference type="ChEBI" id="CHEBI:142516"/>
        <dbReference type="EC" id="2.7.7.108"/>
    </reaction>
</comment>
<comment type="catalytic activity">
    <reaction evidence="1">
        <text>L-threonyl-[protein] + ATP = 3-O-(5'-adenylyl)-L-threonyl-[protein] + diphosphate</text>
        <dbReference type="Rhea" id="RHEA:54292"/>
        <dbReference type="Rhea" id="RHEA-COMP:11060"/>
        <dbReference type="Rhea" id="RHEA-COMP:13847"/>
        <dbReference type="ChEBI" id="CHEBI:30013"/>
        <dbReference type="ChEBI" id="CHEBI:30616"/>
        <dbReference type="ChEBI" id="CHEBI:33019"/>
        <dbReference type="ChEBI" id="CHEBI:138113"/>
        <dbReference type="EC" id="2.7.7.108"/>
    </reaction>
</comment>
<comment type="catalytic activity">
    <reaction evidence="1">
        <text>L-tyrosyl-[protein] + ATP = O-(5'-adenylyl)-L-tyrosyl-[protein] + diphosphate</text>
        <dbReference type="Rhea" id="RHEA:54288"/>
        <dbReference type="Rhea" id="RHEA-COMP:10136"/>
        <dbReference type="Rhea" id="RHEA-COMP:13846"/>
        <dbReference type="ChEBI" id="CHEBI:30616"/>
        <dbReference type="ChEBI" id="CHEBI:33019"/>
        <dbReference type="ChEBI" id="CHEBI:46858"/>
        <dbReference type="ChEBI" id="CHEBI:83624"/>
        <dbReference type="EC" id="2.7.7.108"/>
    </reaction>
</comment>
<comment type="catalytic activity">
    <reaction evidence="1">
        <text>L-histidyl-[protein] + UTP = N(tele)-(5'-uridylyl)-L-histidyl-[protein] + diphosphate</text>
        <dbReference type="Rhea" id="RHEA:83891"/>
        <dbReference type="Rhea" id="RHEA-COMP:9745"/>
        <dbReference type="Rhea" id="RHEA-COMP:20239"/>
        <dbReference type="ChEBI" id="CHEBI:29979"/>
        <dbReference type="ChEBI" id="CHEBI:33019"/>
        <dbReference type="ChEBI" id="CHEBI:46398"/>
        <dbReference type="ChEBI" id="CHEBI:233474"/>
    </reaction>
</comment>
<comment type="catalytic activity">
    <reaction evidence="1">
        <text>L-seryl-[protein] + UTP = O-(5'-uridylyl)-L-seryl-[protein] + diphosphate</text>
        <dbReference type="Rhea" id="RHEA:64604"/>
        <dbReference type="Rhea" id="RHEA-COMP:9863"/>
        <dbReference type="Rhea" id="RHEA-COMP:16635"/>
        <dbReference type="ChEBI" id="CHEBI:29999"/>
        <dbReference type="ChEBI" id="CHEBI:33019"/>
        <dbReference type="ChEBI" id="CHEBI:46398"/>
        <dbReference type="ChEBI" id="CHEBI:156051"/>
    </reaction>
</comment>
<comment type="catalytic activity">
    <reaction evidence="1">
        <text>L-tyrosyl-[protein] + UTP = O-(5'-uridylyl)-L-tyrosyl-[protein] + diphosphate</text>
        <dbReference type="Rhea" id="RHEA:83887"/>
        <dbReference type="Rhea" id="RHEA-COMP:10136"/>
        <dbReference type="Rhea" id="RHEA-COMP:20238"/>
        <dbReference type="ChEBI" id="CHEBI:33019"/>
        <dbReference type="ChEBI" id="CHEBI:46398"/>
        <dbReference type="ChEBI" id="CHEBI:46858"/>
        <dbReference type="ChEBI" id="CHEBI:90602"/>
    </reaction>
</comment>
<comment type="cofactor">
    <cofactor evidence="1">
        <name>Mg(2+)</name>
        <dbReference type="ChEBI" id="CHEBI:18420"/>
    </cofactor>
    <cofactor evidence="1">
        <name>Mn(2+)</name>
        <dbReference type="ChEBI" id="CHEBI:29035"/>
    </cofactor>
</comment>
<comment type="similarity">
    <text evidence="1">Belongs to the SELO family.</text>
</comment>